<dbReference type="EMBL" id="CP001403">
    <property type="protein sequence ID" value="ACP45634.1"/>
    <property type="molecule type" value="Genomic_DNA"/>
</dbReference>
<dbReference type="RefSeq" id="WP_012713707.1">
    <property type="nucleotide sequence ID" value="NC_012622.1"/>
</dbReference>
<dbReference type="SMR" id="C3NE95"/>
<dbReference type="GeneID" id="7806753"/>
<dbReference type="KEGG" id="siy:YG5714_1367"/>
<dbReference type="HOGENOM" id="CLU_027255_1_1_2"/>
<dbReference type="Proteomes" id="UP000002308">
    <property type="component" value="Chromosome"/>
</dbReference>
<dbReference type="GO" id="GO:0005524">
    <property type="term" value="F:ATP binding"/>
    <property type="evidence" value="ECO:0007669"/>
    <property type="project" value="UniProtKB-UniRule"/>
</dbReference>
<dbReference type="GO" id="GO:0016887">
    <property type="term" value="F:ATP hydrolysis activity"/>
    <property type="evidence" value="ECO:0007669"/>
    <property type="project" value="InterPro"/>
</dbReference>
<dbReference type="GO" id="GO:0003689">
    <property type="term" value="F:DNA clamp loader activity"/>
    <property type="evidence" value="ECO:0007669"/>
    <property type="project" value="UniProtKB-UniRule"/>
</dbReference>
<dbReference type="GO" id="GO:0006260">
    <property type="term" value="P:DNA replication"/>
    <property type="evidence" value="ECO:0007669"/>
    <property type="project" value="UniProtKB-UniRule"/>
</dbReference>
<dbReference type="CDD" id="cd00009">
    <property type="entry name" value="AAA"/>
    <property type="match status" value="1"/>
</dbReference>
<dbReference type="CDD" id="cd18140">
    <property type="entry name" value="HLD_clamp_RFC"/>
    <property type="match status" value="1"/>
</dbReference>
<dbReference type="Gene3D" id="1.10.8.60">
    <property type="match status" value="1"/>
</dbReference>
<dbReference type="Gene3D" id="3.40.50.300">
    <property type="entry name" value="P-loop containing nucleotide triphosphate hydrolases"/>
    <property type="match status" value="1"/>
</dbReference>
<dbReference type="HAMAP" id="MF_01508">
    <property type="entry name" value="RfcL"/>
    <property type="match status" value="1"/>
</dbReference>
<dbReference type="InterPro" id="IPR003593">
    <property type="entry name" value="AAA+_ATPase"/>
</dbReference>
<dbReference type="InterPro" id="IPR003959">
    <property type="entry name" value="ATPase_AAA_core"/>
</dbReference>
<dbReference type="InterPro" id="IPR027417">
    <property type="entry name" value="P-loop_NTPase"/>
</dbReference>
<dbReference type="InterPro" id="IPR023935">
    <property type="entry name" value="Rep_factor-C_lsu"/>
</dbReference>
<dbReference type="InterPro" id="IPR047854">
    <property type="entry name" value="RFC_lid"/>
</dbReference>
<dbReference type="NCBIfam" id="NF003226">
    <property type="entry name" value="PRK04195.1-1"/>
    <property type="match status" value="1"/>
</dbReference>
<dbReference type="NCBIfam" id="NF003229">
    <property type="entry name" value="PRK04195.1-5"/>
    <property type="match status" value="1"/>
</dbReference>
<dbReference type="PANTHER" id="PTHR23389">
    <property type="entry name" value="CHROMOSOME TRANSMISSION FIDELITY FACTOR 18"/>
    <property type="match status" value="1"/>
</dbReference>
<dbReference type="PANTHER" id="PTHR23389:SF6">
    <property type="entry name" value="REPLICATION FACTOR C SUBUNIT 1"/>
    <property type="match status" value="1"/>
</dbReference>
<dbReference type="Pfam" id="PF00004">
    <property type="entry name" value="AAA"/>
    <property type="match status" value="1"/>
</dbReference>
<dbReference type="Pfam" id="PF21960">
    <property type="entry name" value="RCF1-5-like_lid"/>
    <property type="match status" value="1"/>
</dbReference>
<dbReference type="SMART" id="SM00382">
    <property type="entry name" value="AAA"/>
    <property type="match status" value="1"/>
</dbReference>
<dbReference type="SUPFAM" id="SSF52540">
    <property type="entry name" value="P-loop containing nucleoside triphosphate hydrolases"/>
    <property type="match status" value="1"/>
</dbReference>
<gene>
    <name evidence="1" type="primary">rfcL</name>
    <name type="ordered locus">YG5714_1367</name>
</gene>
<accession>C3NE95</accession>
<evidence type="ECO:0000255" key="1">
    <source>
        <dbReference type="HAMAP-Rule" id="MF_01508"/>
    </source>
</evidence>
<comment type="function">
    <text evidence="1">Part of the RFC clamp loader complex which loads the PCNA sliding clamp onto DNA.</text>
</comment>
<comment type="subunit">
    <text evidence="1">Heteromultimer composed of small subunits (RfcS) and large subunits (RfcL).</text>
</comment>
<comment type="similarity">
    <text evidence="1">Belongs to the activator 1 small subunits family. RfcL subfamily.</text>
</comment>
<protein>
    <recommendedName>
        <fullName evidence="1">Replication factor C large subunit</fullName>
        <shortName evidence="1">RFC large subunit</shortName>
    </recommendedName>
    <alternativeName>
        <fullName evidence="1">Clamp loader large subunit</fullName>
    </alternativeName>
</protein>
<organism>
    <name type="scientific">Saccharolobus islandicus (strain Y.G.57.14 / Yellowstone #1)</name>
    <name type="common">Sulfolobus islandicus</name>
    <dbReference type="NCBI Taxonomy" id="439386"/>
    <lineage>
        <taxon>Archaea</taxon>
        <taxon>Thermoproteota</taxon>
        <taxon>Thermoprotei</taxon>
        <taxon>Sulfolobales</taxon>
        <taxon>Sulfolobaceae</taxon>
        <taxon>Saccharolobus</taxon>
    </lineage>
</organism>
<name>RFCL_SACI7</name>
<feature type="chain" id="PRO_1000215344" description="Replication factor C large subunit">
    <location>
        <begin position="1"/>
        <end position="405"/>
    </location>
</feature>
<feature type="binding site" evidence="1">
    <location>
        <begin position="47"/>
        <end position="54"/>
    </location>
    <ligand>
        <name>ATP</name>
        <dbReference type="ChEBI" id="CHEBI:30616"/>
    </ligand>
</feature>
<keyword id="KW-0067">ATP-binding</keyword>
<keyword id="KW-0235">DNA replication</keyword>
<keyword id="KW-0547">Nucleotide-binding</keyword>
<reference key="1">
    <citation type="journal article" date="2009" name="Proc. Natl. Acad. Sci. U.S.A.">
        <title>Biogeography of the Sulfolobus islandicus pan-genome.</title>
        <authorList>
            <person name="Reno M.L."/>
            <person name="Held N.L."/>
            <person name="Fields C.J."/>
            <person name="Burke P.V."/>
            <person name="Whitaker R.J."/>
        </authorList>
    </citation>
    <scope>NUCLEOTIDE SEQUENCE [LARGE SCALE GENOMIC DNA]</scope>
    <source>
        <strain>Y.G.57.14 / Yellowstone #1</strain>
    </source>
</reference>
<proteinExistence type="inferred from homology"/>
<sequence length="405" mass="46627">MIQWFLKYRPRSLKDVENQDGAKKELQEWIESWLNGKPNAKAVLLHGPPGVGKTTLAEALAHDYNLELLEMNASDSRKLQDIKGVAEKASVYGSIFGTRGKLILLDEVDGINVREDTGAIQGILELIEKTKYPIIMTANDPWNPALRELRNKTKMVGLNKLGKYPLRRLLKKICQAEKIICDDEALNYIIDTSEGDARYAINMLQGIGEGYGKVTLDLVEAMARRKERELDPFETLRDIFWARYAWQAKNAATSAQIDYDMLIRWISENIPIQYDNIEDVWRAFDALSRASIFLKRAKGGDWDLLSYAYDLMSSGVAAAEIEKKKPNWKPKWKKYQFPSYIQLLSKSKDIRDTRDEIIKKLAIHSSFNKTLNDTYPFFLIFYKKYDKRLSLNTKEKEYLNSASKS</sequence>